<keyword id="KW-0521">NADP</keyword>
<keyword id="KW-0560">Oxidoreductase</keyword>
<keyword id="KW-1185">Reference proteome</keyword>
<dbReference type="EC" id="1.7.1.7" evidence="1"/>
<dbReference type="EMBL" id="AP006627">
    <property type="protein sequence ID" value="BAD65750.1"/>
    <property type="molecule type" value="Genomic_DNA"/>
</dbReference>
<dbReference type="SMR" id="Q5WD10"/>
<dbReference type="STRING" id="66692.ABC3216"/>
<dbReference type="KEGG" id="bcl:ABC3216"/>
<dbReference type="eggNOG" id="COG0516">
    <property type="taxonomic scope" value="Bacteria"/>
</dbReference>
<dbReference type="HOGENOM" id="CLU_022552_5_0_9"/>
<dbReference type="Proteomes" id="UP000001168">
    <property type="component" value="Chromosome"/>
</dbReference>
<dbReference type="GO" id="GO:0005829">
    <property type="term" value="C:cytosol"/>
    <property type="evidence" value="ECO:0007669"/>
    <property type="project" value="TreeGrafter"/>
</dbReference>
<dbReference type="GO" id="GO:1902560">
    <property type="term" value="C:GMP reductase complex"/>
    <property type="evidence" value="ECO:0007669"/>
    <property type="project" value="InterPro"/>
</dbReference>
<dbReference type="GO" id="GO:0003920">
    <property type="term" value="F:GMP reductase activity"/>
    <property type="evidence" value="ECO:0007669"/>
    <property type="project" value="UniProtKB-UniRule"/>
</dbReference>
<dbReference type="GO" id="GO:0006163">
    <property type="term" value="P:purine nucleotide metabolic process"/>
    <property type="evidence" value="ECO:0007669"/>
    <property type="project" value="UniProtKB-UniRule"/>
</dbReference>
<dbReference type="CDD" id="cd00381">
    <property type="entry name" value="IMPDH"/>
    <property type="match status" value="1"/>
</dbReference>
<dbReference type="FunFam" id="3.20.20.70:FF:000079">
    <property type="entry name" value="GMP reductase"/>
    <property type="match status" value="1"/>
</dbReference>
<dbReference type="Gene3D" id="3.20.20.70">
    <property type="entry name" value="Aldolase class I"/>
    <property type="match status" value="1"/>
</dbReference>
<dbReference type="HAMAP" id="MF_01511">
    <property type="entry name" value="GMP_reduct_type2"/>
    <property type="match status" value="1"/>
</dbReference>
<dbReference type="InterPro" id="IPR013785">
    <property type="entry name" value="Aldolase_TIM"/>
</dbReference>
<dbReference type="InterPro" id="IPR050139">
    <property type="entry name" value="GMP_reductase"/>
</dbReference>
<dbReference type="InterPro" id="IPR005994">
    <property type="entry name" value="GuaC_type_2"/>
</dbReference>
<dbReference type="InterPro" id="IPR015875">
    <property type="entry name" value="IMP_DH/GMP_Rdtase_CS"/>
</dbReference>
<dbReference type="InterPro" id="IPR001093">
    <property type="entry name" value="IMP_DH_GMPRt"/>
</dbReference>
<dbReference type="NCBIfam" id="TIGR01306">
    <property type="entry name" value="GMP_reduct_2"/>
    <property type="match status" value="1"/>
</dbReference>
<dbReference type="NCBIfam" id="NF003966">
    <property type="entry name" value="PRK05458.1"/>
    <property type="match status" value="1"/>
</dbReference>
<dbReference type="PANTHER" id="PTHR43170">
    <property type="entry name" value="GMP REDUCTASE"/>
    <property type="match status" value="1"/>
</dbReference>
<dbReference type="PANTHER" id="PTHR43170:SF5">
    <property type="entry name" value="GMP REDUCTASE"/>
    <property type="match status" value="1"/>
</dbReference>
<dbReference type="Pfam" id="PF00478">
    <property type="entry name" value="IMPDH"/>
    <property type="match status" value="1"/>
</dbReference>
<dbReference type="PIRSF" id="PIRSF036500">
    <property type="entry name" value="GMP_red_Firmic"/>
    <property type="match status" value="1"/>
</dbReference>
<dbReference type="SMART" id="SM01240">
    <property type="entry name" value="IMPDH"/>
    <property type="match status" value="1"/>
</dbReference>
<dbReference type="SUPFAM" id="SSF51412">
    <property type="entry name" value="Inosine monophosphate dehydrogenase (IMPDH)"/>
    <property type="match status" value="1"/>
</dbReference>
<dbReference type="PROSITE" id="PS00487">
    <property type="entry name" value="IMP_DH_GMP_RED"/>
    <property type="match status" value="1"/>
</dbReference>
<organism>
    <name type="scientific">Shouchella clausii (strain KSM-K16)</name>
    <name type="common">Alkalihalobacillus clausii</name>
    <dbReference type="NCBI Taxonomy" id="66692"/>
    <lineage>
        <taxon>Bacteria</taxon>
        <taxon>Bacillati</taxon>
        <taxon>Bacillota</taxon>
        <taxon>Bacilli</taxon>
        <taxon>Bacillales</taxon>
        <taxon>Bacillaceae</taxon>
        <taxon>Shouchella</taxon>
    </lineage>
</organism>
<proteinExistence type="inferred from homology"/>
<name>GUAC_SHOC1</name>
<sequence>MMENVFDYEDIQLIPAKCIVGSRAECDTSVELGGRTFKLPVVPANMQTIIDENIARYLAENDYFYIMHRFQPETRLAFVKDMHERGLYASISVGVKEEEYTFVQQLADQHVVPEYVTIDIAHGHSEAVINMIRHIKTHLPDSFVIAGNVGTPEAVRELEHAGADATKVGIGPGKVCITKIKTGFGTGGWQLAALRWCAKAASKPIIADGGIRTHGDIAKSVRFGATMVMIGSLFAGHEESPGDTIEKDGKLYKEYFGSASEYQKGERKNVEGKKMYVEHKGSLAETLLEMEQDLQSSISYAGGKRLDAIRNVDYVVVKNSIFNGDKIY</sequence>
<comment type="function">
    <text evidence="1">Catalyzes the irreversible NADPH-dependent deamination of GMP to IMP. It functions in the conversion of nucleobase, nucleoside and nucleotide derivatives of G to A nucleotides, and in maintaining the intracellular balance of A and G nucleotides.</text>
</comment>
<comment type="catalytic activity">
    <reaction evidence="1">
        <text>IMP + NH4(+) + NADP(+) = GMP + NADPH + 2 H(+)</text>
        <dbReference type="Rhea" id="RHEA:17185"/>
        <dbReference type="ChEBI" id="CHEBI:15378"/>
        <dbReference type="ChEBI" id="CHEBI:28938"/>
        <dbReference type="ChEBI" id="CHEBI:57783"/>
        <dbReference type="ChEBI" id="CHEBI:58053"/>
        <dbReference type="ChEBI" id="CHEBI:58115"/>
        <dbReference type="ChEBI" id="CHEBI:58349"/>
        <dbReference type="EC" id="1.7.1.7"/>
    </reaction>
</comment>
<comment type="similarity">
    <text evidence="1">Belongs to the IMPDH/GMPR family. GuaC type 2 subfamily.</text>
</comment>
<accession>Q5WD10</accession>
<gene>
    <name evidence="1" type="primary">guaC</name>
    <name type="ordered locus">ABC3216</name>
</gene>
<reference key="1">
    <citation type="submission" date="2003-10" db="EMBL/GenBank/DDBJ databases">
        <title>The complete genome sequence of the alkaliphilic Bacillus clausii KSM-K16.</title>
        <authorList>
            <person name="Takaki Y."/>
            <person name="Kageyama Y."/>
            <person name="Shimamura S."/>
            <person name="Suzuki H."/>
            <person name="Nishi S."/>
            <person name="Hatada Y."/>
            <person name="Kawai S."/>
            <person name="Ito S."/>
            <person name="Horikoshi K."/>
        </authorList>
    </citation>
    <scope>NUCLEOTIDE SEQUENCE [LARGE SCALE GENOMIC DNA]</scope>
    <source>
        <strain>KSM-K16</strain>
    </source>
</reference>
<protein>
    <recommendedName>
        <fullName evidence="1">GMP reductase</fullName>
        <ecNumber evidence="1">1.7.1.7</ecNumber>
    </recommendedName>
    <alternativeName>
        <fullName evidence="1">Guanosine 5'-monophosphate oxidoreductase</fullName>
        <shortName evidence="1">Guanosine monophosphate reductase</shortName>
    </alternativeName>
</protein>
<feature type="chain" id="PRO_0000093750" description="GMP reductase">
    <location>
        <begin position="1"/>
        <end position="328"/>
    </location>
</feature>
<feature type="active site" description="Thioimidate intermediate" evidence="1">
    <location>
        <position position="176"/>
    </location>
</feature>
<feature type="binding site" evidence="1">
    <location>
        <begin position="205"/>
        <end position="228"/>
    </location>
    <ligand>
        <name>NADP(+)</name>
        <dbReference type="ChEBI" id="CHEBI:58349"/>
    </ligand>
</feature>
<evidence type="ECO:0000255" key="1">
    <source>
        <dbReference type="HAMAP-Rule" id="MF_01511"/>
    </source>
</evidence>